<accession>Q5VUA4</accession>
<accession>O94796</accession>
<accession>Q4G0E4</accession>
<accession>Q8NEM6</accession>
<accession>Q9UNU8</accession>
<accession>Q9Y2W9</accession>
<gene>
    <name type="primary">ZNF318</name>
    <name type="ORF">HRIHFB2436</name>
</gene>
<sequence>MYRSSARSSVSSHRPKDDGGGGPRSGRSSGSSSGPARRSSPPPPPSGSSSRTPARRPRSPSGHRGRRASPSPPRGRRVSPSPPRARRGSPSPPRGRRLFPPGPAGFRGSSRGESRADYARDGRGDHPGDSGSRRRSPGLCSDSLEKSLRITVGNDHFCVSTPERRRLSDRLGSPVDNLEDMDRDDLTDDSVFTRSSQCSRGLERYISQEEGPLSPFLGQLDEDYRTKETFLHRSDYSPHISCHDELLRGTERNREKLKGYSIRSEERSREAKRPRYDDTVKINSMGGDHPSFTSGTRNYRQRRRSPSPRFLDPEFRELDLARRKREEEEERSRSLSQELVGVDGGGTGCSIPGLSGVLTASEPGYSLHRPEEVSVMPKKSILKKRIEVDIMEPSMQLESFSSSTSSSQDHPLYSGHPSLPLSGAIAAFASEIENKGTMVETALKEPQGNLYQWGPLPGIPKDNSPLREKFGSFLCHKDNLDLKAEGPERHTDFLLPHERASQDGSGFSRILSMLADSTSTQEKRRRSFPDIEDEEKFLYGDEEEDLKAESVPKPLGSSESEVMRQKASSLPSSAPAVKLESLEETNPEYAKIHDLLKTIGLDIGVAEISQLAARTQERLHGKKPSLRSSADRRSSVDRYFSADHCSSVDHRFSADRCSSVDHCFSADRRSSDPHRLESREAHHSNTHSPEVSHPHPPSPVDPYLLTKNSPPFLKSDHPVGHISGPEVVGSGFQSSVAVRCMLPSAPSAPIRLPHTAALSQFHMPRASQFAAARIPPNYQGPAIPPASFDAYRHYMAYAASRWPMYPTSQPSNHPVPEPHRIMPITKQATRSRPNLRVIPTVTPDKPKQKESLRGSIPAAQVPVQVSIPSLIRYNPEKISDEKNRASQKQKVIEEREKLKNDREARQKKMYYLRTELERLHKQQGEMLRKKRREKDGHKDPLLVEVSRLQDNIMKDIAELRQEAEEAEKKQSELDKVAQILGINIFDKSQKSLSDSREPTEKPGKAEKSKSPEKVSSFSNSSSNKESKVNNEKFRTKSPKPAESPQSATKQLDQPTAAYEYYDAGNHWCKDCNTICGTMFDFFTHMHNKKHTQTLDPYNRPWASKTQSEAKQDAIKRTDKITVPAKGSEFLVPISGFYCQLCEEFLGDPISGEQHVKGHQHNEKYKKYVDENPLYEERRNLDRQAGLAVVLETERRRQSELKRKLSEKPKEEKKEKKAKAVKEVKEDDKVSEKLEDQLSEGRNSPEKAENKRNTGIKLQLKEEVKKESPTSSSFGKFSWKKPEKEEEKSSLVTPSISKEEILESSKDKEDGKTEAGKAKPIKIKLSGKTVVAHTSPWMPVVTTSTQTKIRPNLPIPSTVLRKSCSATMSKPAPLNTFLSIKSSGTTAKPLPVVKESSADLLLPPDIISKAFGGEEVILKGSPEEKVVLAEKSEPSHLPEQILPPPPPPPPPPPPPPPVIPHPAAPSAAQANAILAPVKSNPVVSQTLSPGFVGPNILNPVLPVAIMASAQPAAIPSDETAPGVSESDRDQTLFSVLVRPPPPLSSVFSEQAKKLEKRNSCLATANAKDLYDIFYSSGGKGAPETKGAPETKLSGGPLANGENSNLSRTKSSDTSSTSPLNSSASQEELHQDEGLVAAPIVSNSEKPIAKTLVALGKWSVVEHVGPKSTGSTYGFLQPLTRLCQSRPYETITPKTDTLAIWTSSSFQSDTSRDISPEKSELDLGEPGPPGVEPPPQLLDIQCKESQKLVEIHLRESVNQDKESQELRKSEDCRESEIETNTELKERVKELSEGIVDEGVSTSIGPHSIDDSNLNHGNRYMWEGEVKQPNLLMIDKEAEQSNKLMTGSETPSKVVIKLSPQACSFTKAKLDSFLSEARSLLNPQDTPVKISAPELLLHSPARSAMCLTGSPQEQGVSVVSEEGLENSAPESASRTSRYRSLKLKRERSKDFQVKKIYELAVWDENKKRPETWESPEKPKTEALELQDVHPELTVTIESKALEDFEATDLKVEELTALGNLGDMPVDFCTTRVSPAHRSPTVLCQKVCEENSVSPIGCNSSDPADFEPIPSFSGFPLDSPKTLVLDFETEGERNSPNPRSVRIPSPNILKTGLTENVDRGLGGLEGTHQALDLLAGGMMPEEVKESSQLDKQESLGLELKTINSAGLGPSPCLPDLVDFVTRTSGVQKDKLCSPLSEPGDPSKCSSLELGPLQLEISNASTTEVAILQVDDDSGDPLNLVKAPVSRSPPREQVIEDNMVPQGMPEQETTVGAIQDHTESSVHN</sequence>
<comment type="function">
    <molecule>Isoform 2</molecule>
    <text evidence="1">Acts as a transcriptional corepressor for AR-mediated transactivation function. May act as a transcriptional regulator during spermatogenesis and, in particular, during meiotic division.</text>
</comment>
<comment type="function">
    <molecule>Isoform 1</molecule>
    <text evidence="1">Acts as a transcriptional coactivator for AR-mediated transactivation function. May act as a transcriptional regulator during spermatogenesis and, in particular, during meiotic division.</text>
</comment>
<comment type="subunit">
    <text evidence="1">Homodimer. Heterodimer of isoform 1 and isoform 2. Isoform 1 and isoform 2 interact with AR.</text>
</comment>
<comment type="subcellular location">
    <subcellularLocation>
        <location evidence="5">Nucleus</location>
    </subcellularLocation>
</comment>
<comment type="alternative products">
    <event type="alternative splicing"/>
    <isoform>
        <id>Q5VUA4-1</id>
        <name>1</name>
        <sequence type="displayed"/>
    </isoform>
    <isoform>
        <id>Q5VUA4-2</id>
        <name>2</name>
        <sequence type="described" ref="VSP_016592 VSP_016593"/>
    </isoform>
</comment>
<comment type="tissue specificity">
    <text evidence="6">Expressed in endocrine tissue.</text>
</comment>
<comment type="miscellaneous">
    <molecule>Isoform 2</molecule>
    <text evidence="8">May be produced at very low levels due to a premature stop codon in the mRNA, leading to nonsense-mediated mRNA decay.</text>
</comment>
<comment type="sequence caution" evidence="8">
    <conflict type="erroneous initiation">
        <sequence resource="EMBL-CDS" id="AAD17298"/>
    </conflict>
</comment>
<comment type="sequence caution" evidence="8">
    <conflict type="frameshift">
        <sequence resource="EMBL-CDS" id="AAD47387"/>
    </conflict>
</comment>
<comment type="sequence caution" evidence="8">
    <conflict type="erroneous initiation">
        <sequence resource="EMBL-CDS" id="AAH98434"/>
    </conflict>
    <text>Extended N-terminus.</text>
</comment>
<comment type="sequence caution" evidence="8">
    <conflict type="miscellaneous discrepancy">
        <sequence resource="EMBL-CDS" id="AAH98434"/>
    </conflict>
    <text>Contaminating sequence. Potential poly-A sequence starting in position 1214.</text>
</comment>
<evidence type="ECO:0000250" key="1">
    <source>
        <dbReference type="UniProtKB" id="Q99PP2"/>
    </source>
</evidence>
<evidence type="ECO:0000255" key="2"/>
<evidence type="ECO:0000256" key="3">
    <source>
        <dbReference type="SAM" id="MobiDB-lite"/>
    </source>
</evidence>
<evidence type="ECO:0000269" key="4">
    <source>
    </source>
</evidence>
<evidence type="ECO:0000269" key="5">
    <source>
    </source>
</evidence>
<evidence type="ECO:0000269" key="6">
    <source ref="1"/>
</evidence>
<evidence type="ECO:0000303" key="7">
    <source>
    </source>
</evidence>
<evidence type="ECO:0000305" key="8"/>
<evidence type="ECO:0007744" key="9">
    <source>
    </source>
</evidence>
<evidence type="ECO:0007744" key="10">
    <source>
    </source>
</evidence>
<evidence type="ECO:0007744" key="11">
    <source>
    </source>
</evidence>
<evidence type="ECO:0007744" key="12">
    <source>
    </source>
</evidence>
<evidence type="ECO:0007744" key="13">
    <source>
    </source>
</evidence>
<evidence type="ECO:0007744" key="14">
    <source>
    </source>
</evidence>
<evidence type="ECO:0007744" key="15">
    <source>
    </source>
</evidence>
<evidence type="ECO:0007744" key="16">
    <source>
    </source>
</evidence>
<evidence type="ECO:0007744" key="17">
    <source>
    </source>
</evidence>
<organism>
    <name type="scientific">Homo sapiens</name>
    <name type="common">Human</name>
    <dbReference type="NCBI Taxonomy" id="9606"/>
    <lineage>
        <taxon>Eukaryota</taxon>
        <taxon>Metazoa</taxon>
        <taxon>Chordata</taxon>
        <taxon>Craniata</taxon>
        <taxon>Vertebrata</taxon>
        <taxon>Euteleostomi</taxon>
        <taxon>Mammalia</taxon>
        <taxon>Eutheria</taxon>
        <taxon>Euarchontoglires</taxon>
        <taxon>Primates</taxon>
        <taxon>Haplorrhini</taxon>
        <taxon>Catarrhini</taxon>
        <taxon>Hominidae</taxon>
        <taxon>Homo</taxon>
    </lineage>
</organism>
<feature type="chain" id="PRO_0000191807" description="Zinc finger protein 318">
    <location>
        <begin position="1"/>
        <end position="2279"/>
    </location>
</feature>
<feature type="zinc finger region" description="Matrin-type 1">
    <location>
        <begin position="1063"/>
        <end position="1097"/>
    </location>
</feature>
<feature type="zinc finger region" description="Matrin-type 2">
    <location>
        <begin position="1136"/>
        <end position="1166"/>
    </location>
</feature>
<feature type="region of interest" description="Interaction with AR" evidence="1">
    <location>
        <begin position="1"/>
        <end position="1092"/>
    </location>
</feature>
<feature type="region of interest" description="Disordered" evidence="3">
    <location>
        <begin position="1"/>
        <end position="140"/>
    </location>
</feature>
<feature type="region of interest" description="Disordered" evidence="3">
    <location>
        <begin position="164"/>
        <end position="189"/>
    </location>
</feature>
<feature type="region of interest" description="Disordered" evidence="3">
    <location>
        <begin position="279"/>
        <end position="346"/>
    </location>
</feature>
<feature type="region of interest" description="Disordered" evidence="3">
    <location>
        <begin position="397"/>
        <end position="416"/>
    </location>
</feature>
<feature type="region of interest" description="Disordered" evidence="3">
    <location>
        <begin position="514"/>
        <end position="533"/>
    </location>
</feature>
<feature type="region of interest" description="Disordered" evidence="3">
    <location>
        <begin position="540"/>
        <end position="570"/>
    </location>
</feature>
<feature type="region of interest" description="Disordered" evidence="3">
    <location>
        <begin position="664"/>
        <end position="709"/>
    </location>
</feature>
<feature type="region of interest" description="Disordered" evidence="3">
    <location>
        <begin position="922"/>
        <end position="942"/>
    </location>
</feature>
<feature type="region of interest" description="Disordered" evidence="3">
    <location>
        <begin position="989"/>
        <end position="1051"/>
    </location>
</feature>
<feature type="region of interest" description="Disordered" evidence="3">
    <location>
        <begin position="1195"/>
        <end position="1319"/>
    </location>
</feature>
<feature type="region of interest" description="Disordered" evidence="3">
    <location>
        <begin position="1428"/>
        <end position="1463"/>
    </location>
</feature>
<feature type="region of interest" description="Disordered" evidence="3">
    <location>
        <begin position="1577"/>
        <end position="1628"/>
    </location>
</feature>
<feature type="region of interest" description="Disordered" evidence="3">
    <location>
        <begin position="1702"/>
        <end position="1735"/>
    </location>
</feature>
<feature type="region of interest" description="Disordered" evidence="3">
    <location>
        <begin position="1753"/>
        <end position="1775"/>
    </location>
</feature>
<feature type="region of interest" description="Disordered" evidence="3">
    <location>
        <begin position="2252"/>
        <end position="2279"/>
    </location>
</feature>
<feature type="coiled-coil region" evidence="2">
    <location>
        <begin position="315"/>
        <end position="343"/>
    </location>
</feature>
<feature type="coiled-coil region" evidence="2">
    <location>
        <begin position="876"/>
        <end position="980"/>
    </location>
</feature>
<feature type="coiled-coil region" evidence="2">
    <location>
        <begin position="1768"/>
        <end position="1792"/>
    </location>
</feature>
<feature type="compositionally biased region" description="Low complexity" evidence="3">
    <location>
        <begin position="1"/>
        <end position="12"/>
    </location>
</feature>
<feature type="compositionally biased region" description="Low complexity" evidence="3">
    <location>
        <begin position="25"/>
        <end position="39"/>
    </location>
</feature>
<feature type="compositionally biased region" description="Basic residues" evidence="3">
    <location>
        <begin position="53"/>
        <end position="67"/>
    </location>
</feature>
<feature type="compositionally biased region" description="Basic and acidic residues" evidence="3">
    <location>
        <begin position="110"/>
        <end position="132"/>
    </location>
</feature>
<feature type="compositionally biased region" description="Acidic residues" evidence="3">
    <location>
        <begin position="177"/>
        <end position="188"/>
    </location>
</feature>
<feature type="compositionally biased region" description="Basic and acidic residues" evidence="3">
    <location>
        <begin position="311"/>
        <end position="333"/>
    </location>
</feature>
<feature type="compositionally biased region" description="Basic and acidic residues" evidence="3">
    <location>
        <begin position="664"/>
        <end position="683"/>
    </location>
</feature>
<feature type="compositionally biased region" description="Basic and acidic residues" evidence="3">
    <location>
        <begin position="922"/>
        <end position="941"/>
    </location>
</feature>
<feature type="compositionally biased region" description="Basic and acidic residues" evidence="3">
    <location>
        <begin position="989"/>
        <end position="1012"/>
    </location>
</feature>
<feature type="compositionally biased region" description="Low complexity" evidence="3">
    <location>
        <begin position="1013"/>
        <end position="1023"/>
    </location>
</feature>
<feature type="compositionally biased region" description="Basic and acidic residues" evidence="3">
    <location>
        <begin position="1024"/>
        <end position="1034"/>
    </location>
</feature>
<feature type="compositionally biased region" description="Basic and acidic residues" evidence="3">
    <location>
        <begin position="1195"/>
        <end position="1235"/>
    </location>
</feature>
<feature type="compositionally biased region" description="Basic and acidic residues" evidence="3">
    <location>
        <begin position="1242"/>
        <end position="1251"/>
    </location>
</feature>
<feature type="compositionally biased region" description="Basic and acidic residues" evidence="3">
    <location>
        <begin position="1258"/>
        <end position="1267"/>
    </location>
</feature>
<feature type="compositionally biased region" description="Basic and acidic residues" evidence="3">
    <location>
        <begin position="1279"/>
        <end position="1288"/>
    </location>
</feature>
<feature type="compositionally biased region" description="Basic and acidic residues" evidence="3">
    <location>
        <begin position="1296"/>
        <end position="1316"/>
    </location>
</feature>
<feature type="compositionally biased region" description="Pro residues" evidence="3">
    <location>
        <begin position="1440"/>
        <end position="1462"/>
    </location>
</feature>
<feature type="compositionally biased region" description="Low complexity" evidence="3">
    <location>
        <begin position="1602"/>
        <end position="1623"/>
    </location>
</feature>
<feature type="compositionally biased region" description="Basic and acidic residues" evidence="3">
    <location>
        <begin position="1708"/>
        <end position="1719"/>
    </location>
</feature>
<feature type="compositionally biased region" description="Pro residues" evidence="3">
    <location>
        <begin position="1724"/>
        <end position="1734"/>
    </location>
</feature>
<feature type="modified residue" description="Phosphoserine" evidence="14">
    <location>
        <position position="40"/>
    </location>
</feature>
<feature type="modified residue" description="Phosphoserine" evidence="13">
    <location>
        <position position="79"/>
    </location>
</feature>
<feature type="modified residue" description="Phosphoserine" evidence="13">
    <location>
        <position position="81"/>
    </location>
</feature>
<feature type="modified residue" description="Phosphoserine" evidence="10 13 14">
    <location>
        <position position="136"/>
    </location>
</feature>
<feature type="modified residue" description="Phosphoserine" evidence="10 11 15">
    <location>
        <position position="173"/>
    </location>
</feature>
<feature type="modified residue" description="Phosphotyrosine" evidence="1">
    <location>
        <position position="205"/>
    </location>
</feature>
<feature type="modified residue" description="Phosphoserine" evidence="14">
    <location>
        <position position="207"/>
    </location>
</feature>
<feature type="modified residue" description="Phosphoserine" evidence="10 11">
    <location>
        <position position="214"/>
    </location>
</feature>
<feature type="modified residue" description="Phosphoserine" evidence="12">
    <location>
        <position position="464"/>
    </location>
</feature>
<feature type="modified residue" description="Phosphoserine" evidence="14">
    <location>
        <position position="472"/>
    </location>
</feature>
<feature type="modified residue" description="Phosphoserine" evidence="14">
    <location>
        <position position="501"/>
    </location>
</feature>
<feature type="modified residue" description="Phosphoserine" evidence="12 13 14">
    <location>
        <position position="527"/>
    </location>
</feature>
<feature type="modified residue" description="Phosphothreonine" evidence="14">
    <location>
        <position position="842"/>
    </location>
</feature>
<feature type="modified residue" description="Phosphoserine" evidence="14">
    <location>
        <position position="1010"/>
    </location>
</feature>
<feature type="modified residue" description="Phosphoserine" evidence="13 15">
    <location>
        <position position="1037"/>
    </location>
</feature>
<feature type="modified residue" description="Phosphoserine" evidence="9 12 13 14">
    <location>
        <position position="1243"/>
    </location>
</feature>
<feature type="modified residue" description="Phosphoserine" evidence="14 15">
    <location>
        <position position="1267"/>
    </location>
</feature>
<feature type="modified residue" description="Phosphoserine" evidence="12 14">
    <location>
        <position position="1420"/>
    </location>
</feature>
<feature type="modified residue" description="Phosphoserine" evidence="11">
    <location>
        <position position="1713"/>
    </location>
</feature>
<feature type="modified residue" description="Phosphoserine" evidence="14">
    <location>
        <position position="1856"/>
    </location>
</feature>
<feature type="modified residue" description="Phosphoserine" evidence="10 12 14">
    <location>
        <position position="1896"/>
    </location>
</feature>
<feature type="modified residue" description="Phosphoserine" evidence="14">
    <location>
        <position position="1971"/>
    </location>
</feature>
<feature type="modified residue" description="Phosphoserine" evidence="14">
    <location>
        <position position="2030"/>
    </location>
</feature>
<feature type="modified residue" description="Phosphoserine" evidence="14">
    <location>
        <position position="2035"/>
    </location>
</feature>
<feature type="modified residue" description="Phosphoserine" evidence="14">
    <location>
        <position position="2091"/>
    </location>
</feature>
<feature type="modified residue" description="Phosphoserine" evidence="12 13 14 15">
    <location>
        <position position="2101"/>
    </location>
</feature>
<feature type="modified residue" description="Phosphoserine" evidence="10 14">
    <location>
        <position position="2189"/>
    </location>
</feature>
<feature type="modified residue" description="Phosphoserine" evidence="10 14">
    <location>
        <position position="2192"/>
    </location>
</feature>
<feature type="modified residue" description="Phosphoserine" evidence="10 12 14">
    <location>
        <position position="2243"/>
    </location>
</feature>
<feature type="cross-link" description="Glycyl lysine isopeptide (Lys-Gly) (interchain with G-Cter in SUMO2)" evidence="17">
    <location>
        <position position="547"/>
    </location>
</feature>
<feature type="cross-link" description="Glycyl lysine isopeptide (Lys-Gly) (interchain with G-Cter in SUMO2)" evidence="17">
    <location>
        <position position="553"/>
    </location>
</feature>
<feature type="cross-link" description="Glycyl lysine isopeptide (Lys-Gly) (interchain with G-Cter in SUMO2)" evidence="17">
    <location>
        <position position="566"/>
    </location>
</feature>
<feature type="cross-link" description="Glycyl lysine isopeptide (Lys-Gly) (interchain with G-Cter in SUMO2)" evidence="16 17">
    <location>
        <position position="578"/>
    </location>
</feature>
<feature type="splice variant" id="VSP_016592" description="In isoform 2." evidence="7">
    <original>TLDPYNRPWASKTQSEAKQDAIKRT</original>
    <variation>GQFQKSSDFQKEGLQQTFLPPERQG</variation>
    <location>
        <begin position="1093"/>
        <end position="1117"/>
    </location>
</feature>
<feature type="splice variant" id="VSP_016593" description="In isoform 2." evidence="7">
    <location>
        <begin position="1118"/>
        <end position="2279"/>
    </location>
</feature>
<feature type="sequence variant" id="VAR_053759" description="In dbSNP:rs34541323.">
    <original>S</original>
    <variation>I</variation>
    <location>
        <position position="407"/>
    </location>
</feature>
<feature type="sequence variant" id="VAR_036056" description="In a breast cancer sample; somatic mutation; dbSNP:rs141660717." evidence="4">
    <original>N</original>
    <variation>S</variation>
    <location>
        <position position="812"/>
    </location>
</feature>
<feature type="sequence variant" id="VAR_053760" description="In dbSNP:rs9357410.">
    <original>L</original>
    <variation>V</variation>
    <location>
        <position position="870"/>
    </location>
</feature>
<feature type="sequence variant" id="VAR_036057" description="In a breast cancer sample; somatic mutation." evidence="4">
    <original>G</original>
    <variation>R</variation>
    <location>
        <position position="1274"/>
    </location>
</feature>
<feature type="sequence variant" id="VAR_053761" description="In dbSNP:rs10948072.">
    <original>T</original>
    <variation>I</variation>
    <location>
        <position position="1292"/>
    </location>
</feature>
<feature type="sequence variant" id="VAR_053762" description="In dbSNP:rs3734684.">
    <original>A</original>
    <variation>T</variation>
    <location>
        <position position="1580"/>
    </location>
</feature>
<feature type="sequence variant" id="VAR_053763" description="In dbSNP:rs36107018.">
    <original>T</original>
    <variation>I</variation>
    <location>
        <position position="1583"/>
    </location>
</feature>
<feature type="sequence variant" id="VAR_053764" description="In dbSNP:rs1459675." evidence="6">
    <original>V</original>
    <variation>A</variation>
    <location>
        <position position="1797"/>
    </location>
</feature>
<feature type="sequence conflict" description="In Ref. 1; AAD47387." evidence="8" ref="1">
    <original>G</original>
    <variation>R</variation>
    <location>
        <position position="62"/>
    </location>
</feature>
<feature type="sequence conflict" description="In Ref. 1; AAD47387/AAD17298." evidence="8" ref="1">
    <original>G</original>
    <variation>V</variation>
    <location>
        <position position="75"/>
    </location>
</feature>
<feature type="sequence conflict" description="In Ref. 1; AAD47387/AAD17298." evidence="8" ref="1">
    <original>RT</original>
    <variation>CI</variation>
    <location>
        <begin position="1034"/>
        <end position="1035"/>
    </location>
</feature>
<feature type="sequence conflict" description="In Ref. 1; AAD47387/AAD17298." evidence="8" ref="1">
    <original>L</original>
    <variation>F</variation>
    <location>
        <position position="1259"/>
    </location>
</feature>
<feature type="sequence conflict" description="In Ref. 1; AAD47387/AAD17298." evidence="8" ref="1">
    <original>R</original>
    <variation>G</variation>
    <location>
        <position position="1349"/>
    </location>
</feature>
<feature type="sequence conflict" description="In Ref. 1; AAD47387/AAD17298." evidence="8" ref="1">
    <original>S</original>
    <variation>F</variation>
    <location>
        <position position="2160"/>
    </location>
</feature>
<feature type="sequence conflict" description="In Ref. 4; BAA34799." evidence="8" ref="4">
    <original>V</original>
    <variation>D</variation>
    <location>
        <position position="2173"/>
    </location>
</feature>
<reference key="1">
    <citation type="submission" date="1999-01" db="EMBL/GenBank/DDBJ databases">
        <title>A novel cDNA expressed in endocrine tissue.</title>
        <authorList>
            <person name="Lopez-Egido J.R."/>
            <person name="Oberg K."/>
            <person name="Gobl A.E."/>
        </authorList>
    </citation>
    <scope>NUCLEOTIDE SEQUENCE [MRNA] (ISOFORM 1)</scope>
    <scope>TISSUE SPECIFICITY</scope>
    <scope>VARIANT ALA-1797</scope>
</reference>
<reference key="2">
    <citation type="journal article" date="2003" name="Nature">
        <title>The DNA sequence and analysis of human chromosome 6.</title>
        <authorList>
            <person name="Mungall A.J."/>
            <person name="Palmer S.A."/>
            <person name="Sims S.K."/>
            <person name="Edwards C.A."/>
            <person name="Ashurst J.L."/>
            <person name="Wilming L."/>
            <person name="Jones M.C."/>
            <person name="Horton R."/>
            <person name="Hunt S.E."/>
            <person name="Scott C.E."/>
            <person name="Gilbert J.G.R."/>
            <person name="Clamp M.E."/>
            <person name="Bethel G."/>
            <person name="Milne S."/>
            <person name="Ainscough R."/>
            <person name="Almeida J.P."/>
            <person name="Ambrose K.D."/>
            <person name="Andrews T.D."/>
            <person name="Ashwell R.I.S."/>
            <person name="Babbage A.K."/>
            <person name="Bagguley C.L."/>
            <person name="Bailey J."/>
            <person name="Banerjee R."/>
            <person name="Barker D.J."/>
            <person name="Barlow K.F."/>
            <person name="Bates K."/>
            <person name="Beare D.M."/>
            <person name="Beasley H."/>
            <person name="Beasley O."/>
            <person name="Bird C.P."/>
            <person name="Blakey S.E."/>
            <person name="Bray-Allen S."/>
            <person name="Brook J."/>
            <person name="Brown A.J."/>
            <person name="Brown J.Y."/>
            <person name="Burford D.C."/>
            <person name="Burrill W."/>
            <person name="Burton J."/>
            <person name="Carder C."/>
            <person name="Carter N.P."/>
            <person name="Chapman J.C."/>
            <person name="Clark S.Y."/>
            <person name="Clark G."/>
            <person name="Clee C.M."/>
            <person name="Clegg S."/>
            <person name="Cobley V."/>
            <person name="Collier R.E."/>
            <person name="Collins J.E."/>
            <person name="Colman L.K."/>
            <person name="Corby N.R."/>
            <person name="Coville G.J."/>
            <person name="Culley K.M."/>
            <person name="Dhami P."/>
            <person name="Davies J."/>
            <person name="Dunn M."/>
            <person name="Earthrowl M.E."/>
            <person name="Ellington A.E."/>
            <person name="Evans K.A."/>
            <person name="Faulkner L."/>
            <person name="Francis M.D."/>
            <person name="Frankish A."/>
            <person name="Frankland J."/>
            <person name="French L."/>
            <person name="Garner P."/>
            <person name="Garnett J."/>
            <person name="Ghori M.J."/>
            <person name="Gilby L.M."/>
            <person name="Gillson C.J."/>
            <person name="Glithero R.J."/>
            <person name="Grafham D.V."/>
            <person name="Grant M."/>
            <person name="Gribble S."/>
            <person name="Griffiths C."/>
            <person name="Griffiths M.N.D."/>
            <person name="Hall R."/>
            <person name="Halls K.S."/>
            <person name="Hammond S."/>
            <person name="Harley J.L."/>
            <person name="Hart E.A."/>
            <person name="Heath P.D."/>
            <person name="Heathcott R."/>
            <person name="Holmes S.J."/>
            <person name="Howden P.J."/>
            <person name="Howe K.L."/>
            <person name="Howell G.R."/>
            <person name="Huckle E."/>
            <person name="Humphray S.J."/>
            <person name="Humphries M.D."/>
            <person name="Hunt A.R."/>
            <person name="Johnson C.M."/>
            <person name="Joy A.A."/>
            <person name="Kay M."/>
            <person name="Keenan S.J."/>
            <person name="Kimberley A.M."/>
            <person name="King A."/>
            <person name="Laird G.K."/>
            <person name="Langford C."/>
            <person name="Lawlor S."/>
            <person name="Leongamornlert D.A."/>
            <person name="Leversha M."/>
            <person name="Lloyd C.R."/>
            <person name="Lloyd D.M."/>
            <person name="Loveland J.E."/>
            <person name="Lovell J."/>
            <person name="Martin S."/>
            <person name="Mashreghi-Mohammadi M."/>
            <person name="Maslen G.L."/>
            <person name="Matthews L."/>
            <person name="McCann O.T."/>
            <person name="McLaren S.J."/>
            <person name="McLay K."/>
            <person name="McMurray A."/>
            <person name="Moore M.J.F."/>
            <person name="Mullikin J.C."/>
            <person name="Niblett D."/>
            <person name="Nickerson T."/>
            <person name="Novik K.L."/>
            <person name="Oliver K."/>
            <person name="Overton-Larty E.K."/>
            <person name="Parker A."/>
            <person name="Patel R."/>
            <person name="Pearce A.V."/>
            <person name="Peck A.I."/>
            <person name="Phillimore B.J.C.T."/>
            <person name="Phillips S."/>
            <person name="Plumb R.W."/>
            <person name="Porter K.M."/>
            <person name="Ramsey Y."/>
            <person name="Ranby S.A."/>
            <person name="Rice C.M."/>
            <person name="Ross M.T."/>
            <person name="Searle S.M."/>
            <person name="Sehra H.K."/>
            <person name="Sheridan E."/>
            <person name="Skuce C.D."/>
            <person name="Smith S."/>
            <person name="Smith M."/>
            <person name="Spraggon L."/>
            <person name="Squares S.L."/>
            <person name="Steward C.A."/>
            <person name="Sycamore N."/>
            <person name="Tamlyn-Hall G."/>
            <person name="Tester J."/>
            <person name="Theaker A.J."/>
            <person name="Thomas D.W."/>
            <person name="Thorpe A."/>
            <person name="Tracey A."/>
            <person name="Tromans A."/>
            <person name="Tubby B."/>
            <person name="Wall M."/>
            <person name="Wallis J.M."/>
            <person name="West A.P."/>
            <person name="White S.S."/>
            <person name="Whitehead S.L."/>
            <person name="Whittaker H."/>
            <person name="Wild A."/>
            <person name="Willey D.J."/>
            <person name="Wilmer T.E."/>
            <person name="Wood J.M."/>
            <person name="Wray P.W."/>
            <person name="Wyatt J.C."/>
            <person name="Young L."/>
            <person name="Younger R.M."/>
            <person name="Bentley D.R."/>
            <person name="Coulson A."/>
            <person name="Durbin R.M."/>
            <person name="Hubbard T."/>
            <person name="Sulston J.E."/>
            <person name="Dunham I."/>
            <person name="Rogers J."/>
            <person name="Beck S."/>
        </authorList>
    </citation>
    <scope>NUCLEOTIDE SEQUENCE [LARGE SCALE GENOMIC DNA]</scope>
</reference>
<reference key="3">
    <citation type="journal article" date="2004" name="Genome Res.">
        <title>The status, quality, and expansion of the NIH full-length cDNA project: the Mammalian Gene Collection (MGC).</title>
        <authorList>
            <consortium name="The MGC Project Team"/>
        </authorList>
    </citation>
    <scope>NUCLEOTIDE SEQUENCE [LARGE SCALE MRNA] (ISOFORM 2)</scope>
    <scope>NUCLEOTIDE SEQUENCE [LARGE SCALE MRNA] OF 1-1213 (ISOFORM 1)</scope>
    <source>
        <tissue>Lymph</tissue>
        <tissue>Testis</tissue>
    </source>
</reference>
<reference key="4">
    <citation type="journal article" date="1998" name="Nat. Biotechnol.">
        <title>Selection system for genes encoding nuclear-targeted proteins.</title>
        <authorList>
            <person name="Ueki N."/>
            <person name="Oda T."/>
            <person name="Kondo M."/>
            <person name="Yano K."/>
            <person name="Noguchi T."/>
            <person name="Muramatsu M.-A."/>
        </authorList>
    </citation>
    <scope>NUCLEOTIDE SEQUENCE [LARGE SCALE MRNA] OF 2056-2279 (ISOFORM 1)</scope>
    <scope>SUBCELLULAR LOCATION</scope>
    <source>
        <tissue>Fetal brain</tissue>
    </source>
</reference>
<reference key="5">
    <citation type="journal article" date="2006" name="Cell">
        <title>Global, in vivo, and site-specific phosphorylation dynamics in signaling networks.</title>
        <authorList>
            <person name="Olsen J.V."/>
            <person name="Blagoev B."/>
            <person name="Gnad F."/>
            <person name="Macek B."/>
            <person name="Kumar C."/>
            <person name="Mortensen P."/>
            <person name="Mann M."/>
        </authorList>
    </citation>
    <scope>PHOSPHORYLATION [LARGE SCALE ANALYSIS] AT SER-1243</scope>
    <scope>IDENTIFICATION BY MASS SPECTROMETRY [LARGE SCALE ANALYSIS]</scope>
    <source>
        <tissue>Cervix carcinoma</tissue>
    </source>
</reference>
<reference key="6">
    <citation type="journal article" date="2007" name="Science">
        <title>ATM and ATR substrate analysis reveals extensive protein networks responsive to DNA damage.</title>
        <authorList>
            <person name="Matsuoka S."/>
            <person name="Ballif B.A."/>
            <person name="Smogorzewska A."/>
            <person name="McDonald E.R. III"/>
            <person name="Hurov K.E."/>
            <person name="Luo J."/>
            <person name="Bakalarski C.E."/>
            <person name="Zhao Z."/>
            <person name="Solimini N."/>
            <person name="Lerenthal Y."/>
            <person name="Shiloh Y."/>
            <person name="Gygi S.P."/>
            <person name="Elledge S.J."/>
        </authorList>
    </citation>
    <scope>IDENTIFICATION BY MASS SPECTROMETRY [LARGE SCALE ANALYSIS]</scope>
    <source>
        <tissue>Embryonic kidney</tissue>
    </source>
</reference>
<reference key="7">
    <citation type="journal article" date="2008" name="Proc. Natl. Acad. Sci. U.S.A.">
        <title>A quantitative atlas of mitotic phosphorylation.</title>
        <authorList>
            <person name="Dephoure N."/>
            <person name="Zhou C."/>
            <person name="Villen J."/>
            <person name="Beausoleil S.A."/>
            <person name="Bakalarski C.E."/>
            <person name="Elledge S.J."/>
            <person name="Gygi S.P."/>
        </authorList>
    </citation>
    <scope>PHOSPHORYLATION [LARGE SCALE ANALYSIS] AT SER-136; SER-173; SER-214; SER-1896; SER-2189; SER-2192 AND SER-2243</scope>
    <scope>IDENTIFICATION BY MASS SPECTROMETRY [LARGE SCALE ANALYSIS]</scope>
    <source>
        <tissue>Cervix carcinoma</tissue>
    </source>
</reference>
<reference key="8">
    <citation type="journal article" date="2009" name="Anal. Chem.">
        <title>Lys-N and trypsin cover complementary parts of the phosphoproteome in a refined SCX-based approach.</title>
        <authorList>
            <person name="Gauci S."/>
            <person name="Helbig A.O."/>
            <person name="Slijper M."/>
            <person name="Krijgsveld J."/>
            <person name="Heck A.J."/>
            <person name="Mohammed S."/>
        </authorList>
    </citation>
    <scope>IDENTIFICATION BY MASS SPECTROMETRY [LARGE SCALE ANALYSIS]</scope>
</reference>
<reference key="9">
    <citation type="journal article" date="2009" name="Sci. Signal.">
        <title>Quantitative phosphoproteomic analysis of T cell receptor signaling reveals system-wide modulation of protein-protein interactions.</title>
        <authorList>
            <person name="Mayya V."/>
            <person name="Lundgren D.H."/>
            <person name="Hwang S.-I."/>
            <person name="Rezaul K."/>
            <person name="Wu L."/>
            <person name="Eng J.K."/>
            <person name="Rodionov V."/>
            <person name="Han D.K."/>
        </authorList>
    </citation>
    <scope>PHOSPHORYLATION [LARGE SCALE ANALYSIS] AT SER-173; SER-214 AND SER-1713</scope>
    <scope>IDENTIFICATION BY MASS SPECTROMETRY [LARGE SCALE ANALYSIS]</scope>
    <source>
        <tissue>Leukemic T-cell</tissue>
    </source>
</reference>
<reference key="10">
    <citation type="journal article" date="2010" name="Sci. Signal.">
        <title>Quantitative phosphoproteomics reveals widespread full phosphorylation site occupancy during mitosis.</title>
        <authorList>
            <person name="Olsen J.V."/>
            <person name="Vermeulen M."/>
            <person name="Santamaria A."/>
            <person name="Kumar C."/>
            <person name="Miller M.L."/>
            <person name="Jensen L.J."/>
            <person name="Gnad F."/>
            <person name="Cox J."/>
            <person name="Jensen T.S."/>
            <person name="Nigg E.A."/>
            <person name="Brunak S."/>
            <person name="Mann M."/>
        </authorList>
    </citation>
    <scope>PHOSPHORYLATION [LARGE SCALE ANALYSIS] AT SER-464; SER-527; SER-1243; SER-1420; SER-1896; SER-2101 AND SER-2243</scope>
    <scope>IDENTIFICATION BY MASS SPECTROMETRY [LARGE SCALE ANALYSIS]</scope>
    <source>
        <tissue>Cervix carcinoma</tissue>
    </source>
</reference>
<reference key="11">
    <citation type="journal article" date="2011" name="BMC Syst. Biol.">
        <title>Initial characterization of the human central proteome.</title>
        <authorList>
            <person name="Burkard T.R."/>
            <person name="Planyavsky M."/>
            <person name="Kaupe I."/>
            <person name="Breitwieser F.P."/>
            <person name="Buerckstuemmer T."/>
            <person name="Bennett K.L."/>
            <person name="Superti-Furga G."/>
            <person name="Colinge J."/>
        </authorList>
    </citation>
    <scope>IDENTIFICATION BY MASS SPECTROMETRY [LARGE SCALE ANALYSIS]</scope>
</reference>
<reference key="12">
    <citation type="journal article" date="2011" name="Sci. Signal.">
        <title>System-wide temporal characterization of the proteome and phosphoproteome of human embryonic stem cell differentiation.</title>
        <authorList>
            <person name="Rigbolt K.T."/>
            <person name="Prokhorova T.A."/>
            <person name="Akimov V."/>
            <person name="Henningsen J."/>
            <person name="Johansen P.T."/>
            <person name="Kratchmarova I."/>
            <person name="Kassem M."/>
            <person name="Mann M."/>
            <person name="Olsen J.V."/>
            <person name="Blagoev B."/>
        </authorList>
    </citation>
    <scope>PHOSPHORYLATION [LARGE SCALE ANALYSIS] AT SER-79; SER-81; SER-136; SER-527; SER-1037; SER-1243 AND SER-2101</scope>
    <scope>IDENTIFICATION BY MASS SPECTROMETRY [LARGE SCALE ANALYSIS]</scope>
</reference>
<reference key="13">
    <citation type="journal article" date="2013" name="J. Proteome Res.">
        <title>Toward a comprehensive characterization of a human cancer cell phosphoproteome.</title>
        <authorList>
            <person name="Zhou H."/>
            <person name="Di Palma S."/>
            <person name="Preisinger C."/>
            <person name="Peng M."/>
            <person name="Polat A.N."/>
            <person name="Heck A.J."/>
            <person name="Mohammed S."/>
        </authorList>
    </citation>
    <scope>PHOSPHORYLATION [LARGE SCALE ANALYSIS] AT SER-40; SER-136; SER-207; SER-472; SER-501; SER-527; THR-842; SER-1010; SER-1243; SER-1267; SER-1420; SER-1856; SER-1896; SER-1971; SER-2030; SER-2035; SER-2091; SER-2101; SER-2189; SER-2192 AND SER-2243</scope>
    <scope>IDENTIFICATION BY MASS SPECTROMETRY [LARGE SCALE ANALYSIS]</scope>
    <source>
        <tissue>Cervix carcinoma</tissue>
        <tissue>Erythroleukemia</tissue>
    </source>
</reference>
<reference key="14">
    <citation type="journal article" date="2014" name="J. Proteomics">
        <title>An enzyme assisted RP-RPLC approach for in-depth analysis of human liver phosphoproteome.</title>
        <authorList>
            <person name="Bian Y."/>
            <person name="Song C."/>
            <person name="Cheng K."/>
            <person name="Dong M."/>
            <person name="Wang F."/>
            <person name="Huang J."/>
            <person name="Sun D."/>
            <person name="Wang L."/>
            <person name="Ye M."/>
            <person name="Zou H."/>
        </authorList>
    </citation>
    <scope>PHOSPHORYLATION [LARGE SCALE ANALYSIS] AT SER-173; SER-1037; SER-1267 AND SER-2101</scope>
    <scope>IDENTIFICATION BY MASS SPECTROMETRY [LARGE SCALE ANALYSIS]</scope>
    <source>
        <tissue>Liver</tissue>
    </source>
</reference>
<reference key="15">
    <citation type="journal article" date="2015" name="Cell Rep.">
        <title>SUMO-2 orchestrates chromatin modifiers in response to DNA damage.</title>
        <authorList>
            <person name="Hendriks I.A."/>
            <person name="Treffers L.W."/>
            <person name="Verlaan-de Vries M."/>
            <person name="Olsen J.V."/>
            <person name="Vertegaal A.C."/>
        </authorList>
    </citation>
    <scope>SUMOYLATION [LARGE SCALE ANALYSIS] AT LYS-578</scope>
    <scope>IDENTIFICATION BY MASS SPECTROMETRY [LARGE SCALE ANALYSIS]</scope>
</reference>
<reference key="16">
    <citation type="journal article" date="2017" name="Nat. Struct. Mol. Biol.">
        <title>Site-specific mapping of the human SUMO proteome reveals co-modification with phosphorylation.</title>
        <authorList>
            <person name="Hendriks I.A."/>
            <person name="Lyon D."/>
            <person name="Young C."/>
            <person name="Jensen L.J."/>
            <person name="Vertegaal A.C."/>
            <person name="Nielsen M.L."/>
        </authorList>
    </citation>
    <scope>SUMOYLATION [LARGE SCALE ANALYSIS] AT LYS-547; LYS-553; LYS-566 AND LYS-578</scope>
    <scope>IDENTIFICATION BY MASS SPECTROMETRY [LARGE SCALE ANALYSIS]</scope>
</reference>
<reference key="17">
    <citation type="journal article" date="2006" name="Science">
        <title>The consensus coding sequences of human breast and colorectal cancers.</title>
        <authorList>
            <person name="Sjoeblom T."/>
            <person name="Jones S."/>
            <person name="Wood L.D."/>
            <person name="Parsons D.W."/>
            <person name="Lin J."/>
            <person name="Barber T.D."/>
            <person name="Mandelker D."/>
            <person name="Leary R.J."/>
            <person name="Ptak J."/>
            <person name="Silliman N."/>
            <person name="Szabo S."/>
            <person name="Buckhaults P."/>
            <person name="Farrell C."/>
            <person name="Meeh P."/>
            <person name="Markowitz S.D."/>
            <person name="Willis J."/>
            <person name="Dawson D."/>
            <person name="Willson J.K.V."/>
            <person name="Gazdar A.F."/>
            <person name="Hartigan J."/>
            <person name="Wu L."/>
            <person name="Liu C."/>
            <person name="Parmigiani G."/>
            <person name="Park B.H."/>
            <person name="Bachman K.E."/>
            <person name="Papadopoulos N."/>
            <person name="Vogelstein B."/>
            <person name="Kinzler K.W."/>
            <person name="Velculescu V.E."/>
        </authorList>
    </citation>
    <scope>VARIANTS [LARGE SCALE ANALYSIS] SER-812 AND ARG-1274</scope>
</reference>
<dbReference type="EMBL" id="AF090114">
    <property type="protein sequence ID" value="AAD47387.1"/>
    <property type="status" value="ALT_FRAME"/>
    <property type="molecule type" value="mRNA"/>
</dbReference>
<dbReference type="EMBL" id="AF121141">
    <property type="protein sequence ID" value="AAD17298.1"/>
    <property type="status" value="ALT_INIT"/>
    <property type="molecule type" value="mRNA"/>
</dbReference>
<dbReference type="EMBL" id="AL590383">
    <property type="status" value="NOT_ANNOTATED_CDS"/>
    <property type="molecule type" value="Genomic_DNA"/>
</dbReference>
<dbReference type="EMBL" id="AL583834">
    <property type="status" value="NOT_ANNOTATED_CDS"/>
    <property type="molecule type" value="Genomic_DNA"/>
</dbReference>
<dbReference type="EMBL" id="BC030687">
    <property type="status" value="NOT_ANNOTATED_CDS"/>
    <property type="molecule type" value="mRNA"/>
</dbReference>
<dbReference type="EMBL" id="BC098434">
    <property type="protein sequence ID" value="AAH98434.1"/>
    <property type="status" value="ALT_SEQ"/>
    <property type="molecule type" value="mRNA"/>
</dbReference>
<dbReference type="EMBL" id="AB015342">
    <property type="protein sequence ID" value="BAA34799.1"/>
    <property type="molecule type" value="mRNA"/>
</dbReference>
<dbReference type="CCDS" id="CCDS4895.2">
    <molecule id="Q5VUA4-1"/>
</dbReference>
<dbReference type="RefSeq" id="NP_055160.2">
    <molecule id="Q5VUA4-1"/>
    <property type="nucleotide sequence ID" value="NM_014345.3"/>
</dbReference>
<dbReference type="RefSeq" id="XP_011512754.1">
    <property type="nucleotide sequence ID" value="XM_011514452.2"/>
</dbReference>
<dbReference type="SMR" id="Q5VUA4"/>
<dbReference type="BioGRID" id="117299">
    <property type="interactions" value="135"/>
</dbReference>
<dbReference type="FunCoup" id="Q5VUA4">
    <property type="interactions" value="3653"/>
</dbReference>
<dbReference type="IntAct" id="Q5VUA4">
    <property type="interactions" value="97"/>
</dbReference>
<dbReference type="MINT" id="Q5VUA4"/>
<dbReference type="STRING" id="9606.ENSP00000354964"/>
<dbReference type="GlyConnect" id="2091">
    <property type="glycosylation" value="1 N-Linked glycan (1 site)"/>
</dbReference>
<dbReference type="GlyCosmos" id="Q5VUA4">
    <property type="glycosylation" value="4 sites, 3 glycans"/>
</dbReference>
<dbReference type="GlyGen" id="Q5VUA4">
    <property type="glycosylation" value="10 sites, 2 N-linked glycans (1 site), 1 O-linked glycan (8 sites)"/>
</dbReference>
<dbReference type="iPTMnet" id="Q5VUA4"/>
<dbReference type="PhosphoSitePlus" id="Q5VUA4"/>
<dbReference type="BioMuta" id="ZNF318"/>
<dbReference type="DMDM" id="166215018"/>
<dbReference type="jPOST" id="Q5VUA4"/>
<dbReference type="MassIVE" id="Q5VUA4"/>
<dbReference type="PaxDb" id="9606-ENSP00000354964"/>
<dbReference type="PeptideAtlas" id="Q5VUA4"/>
<dbReference type="ProteomicsDB" id="65403">
    <molecule id="Q5VUA4-1"/>
</dbReference>
<dbReference type="ProteomicsDB" id="65404">
    <molecule id="Q5VUA4-2"/>
</dbReference>
<dbReference type="Pumba" id="Q5VUA4"/>
<dbReference type="Antibodypedia" id="16456">
    <property type="antibodies" value="90 antibodies from 21 providers"/>
</dbReference>
<dbReference type="DNASU" id="24149"/>
<dbReference type="Ensembl" id="ENST00000361428.3">
    <molecule id="Q5VUA4-1"/>
    <property type="protein sequence ID" value="ENSP00000354964.2"/>
    <property type="gene ID" value="ENSG00000171467.16"/>
</dbReference>
<dbReference type="Ensembl" id="ENST00000605935.5">
    <molecule id="Q5VUA4-2"/>
    <property type="protein sequence ID" value="ENSP00000475748.1"/>
    <property type="gene ID" value="ENSG00000171467.16"/>
</dbReference>
<dbReference type="GeneID" id="24149"/>
<dbReference type="KEGG" id="hsa:24149"/>
<dbReference type="MANE-Select" id="ENST00000361428.3">
    <property type="protein sequence ID" value="ENSP00000354964.2"/>
    <property type="RefSeq nucleotide sequence ID" value="NM_014345.3"/>
    <property type="RefSeq protein sequence ID" value="NP_055160.2"/>
</dbReference>
<dbReference type="UCSC" id="uc003ouw.4">
    <molecule id="Q5VUA4-1"/>
    <property type="organism name" value="human"/>
</dbReference>
<dbReference type="AGR" id="HGNC:13578"/>
<dbReference type="CTD" id="24149"/>
<dbReference type="DisGeNET" id="24149"/>
<dbReference type="GeneCards" id="ZNF318"/>
<dbReference type="HGNC" id="HGNC:13578">
    <property type="gene designation" value="ZNF318"/>
</dbReference>
<dbReference type="HPA" id="ENSG00000171467">
    <property type="expression patterns" value="Low tissue specificity"/>
</dbReference>
<dbReference type="MIM" id="617512">
    <property type="type" value="gene"/>
</dbReference>
<dbReference type="neXtProt" id="NX_Q5VUA4"/>
<dbReference type="OpenTargets" id="ENSG00000171467"/>
<dbReference type="PharmGKB" id="PA134923137"/>
<dbReference type="VEuPathDB" id="HostDB:ENSG00000171467"/>
<dbReference type="eggNOG" id="ENOG502R1ZF">
    <property type="taxonomic scope" value="Eukaryota"/>
</dbReference>
<dbReference type="GeneTree" id="ENSGT00390000000614"/>
<dbReference type="HOGENOM" id="CLU_306659_0_0_1"/>
<dbReference type="InParanoid" id="Q5VUA4"/>
<dbReference type="OMA" id="DTLAMWT"/>
<dbReference type="OrthoDB" id="9909793at2759"/>
<dbReference type="PAN-GO" id="Q5VUA4">
    <property type="GO annotations" value="3 GO annotations based on evolutionary models"/>
</dbReference>
<dbReference type="PhylomeDB" id="Q5VUA4"/>
<dbReference type="TreeFam" id="TF350583"/>
<dbReference type="PathwayCommons" id="Q5VUA4"/>
<dbReference type="SignaLink" id="Q5VUA4"/>
<dbReference type="SIGNOR" id="Q5VUA4"/>
<dbReference type="BioGRID-ORCS" id="24149">
    <property type="hits" value="14 hits in 1194 CRISPR screens"/>
</dbReference>
<dbReference type="ChiTaRS" id="ZNF318">
    <property type="organism name" value="human"/>
</dbReference>
<dbReference type="GeneWiki" id="ZNF318"/>
<dbReference type="GenomeRNAi" id="24149"/>
<dbReference type="Pharos" id="Q5VUA4">
    <property type="development level" value="Tbio"/>
</dbReference>
<dbReference type="PRO" id="PR:Q5VUA4"/>
<dbReference type="Proteomes" id="UP000005640">
    <property type="component" value="Chromosome 6"/>
</dbReference>
<dbReference type="RNAct" id="Q5VUA4">
    <property type="molecule type" value="protein"/>
</dbReference>
<dbReference type="Bgee" id="ENSG00000171467">
    <property type="expression patterns" value="Expressed in left testis and 194 other cell types or tissues"/>
</dbReference>
<dbReference type="ExpressionAtlas" id="Q5VUA4">
    <property type="expression patterns" value="baseline and differential"/>
</dbReference>
<dbReference type="GO" id="GO:0005829">
    <property type="term" value="C:cytosol"/>
    <property type="evidence" value="ECO:0000314"/>
    <property type="project" value="HPA"/>
</dbReference>
<dbReference type="GO" id="GO:0005654">
    <property type="term" value="C:nucleoplasm"/>
    <property type="evidence" value="ECO:0000314"/>
    <property type="project" value="HPA"/>
</dbReference>
<dbReference type="GO" id="GO:0003676">
    <property type="term" value="F:nucleic acid binding"/>
    <property type="evidence" value="ECO:0007669"/>
    <property type="project" value="InterPro"/>
</dbReference>
<dbReference type="GO" id="GO:0042803">
    <property type="term" value="F:protein homodimerization activity"/>
    <property type="evidence" value="ECO:0000250"/>
    <property type="project" value="UniProtKB"/>
</dbReference>
<dbReference type="GO" id="GO:0008270">
    <property type="term" value="F:zinc ion binding"/>
    <property type="evidence" value="ECO:0007669"/>
    <property type="project" value="UniProtKB-KW"/>
</dbReference>
<dbReference type="GO" id="GO:0051321">
    <property type="term" value="P:meiotic cell cycle"/>
    <property type="evidence" value="ECO:0007669"/>
    <property type="project" value="UniProtKB-KW"/>
</dbReference>
<dbReference type="GO" id="GO:0045892">
    <property type="term" value="P:negative regulation of DNA-templated transcription"/>
    <property type="evidence" value="ECO:0000250"/>
    <property type="project" value="UniProtKB"/>
</dbReference>
<dbReference type="GO" id="GO:0045893">
    <property type="term" value="P:positive regulation of DNA-templated transcription"/>
    <property type="evidence" value="ECO:0000250"/>
    <property type="project" value="UniProtKB"/>
</dbReference>
<dbReference type="InterPro" id="IPR003604">
    <property type="entry name" value="Matrin/U1-like-C_Znf_C2H2"/>
</dbReference>
<dbReference type="InterPro" id="IPR055309">
    <property type="entry name" value="Znf318-like"/>
</dbReference>
<dbReference type="PANTHER" id="PTHR15577">
    <property type="entry name" value="ZINC FINGER CONTAINING PROTEIN"/>
    <property type="match status" value="1"/>
</dbReference>
<dbReference type="PANTHER" id="PTHR15577:SF2">
    <property type="entry name" value="ZINC FINGER PROTEIN 318"/>
    <property type="match status" value="1"/>
</dbReference>
<dbReference type="SMART" id="SM00451">
    <property type="entry name" value="ZnF_U1"/>
    <property type="match status" value="2"/>
</dbReference>
<protein>
    <recommendedName>
        <fullName>Zinc finger protein 318</fullName>
    </recommendedName>
    <alternativeName>
        <fullName>Endocrine regulatory protein</fullName>
    </alternativeName>
</protein>
<proteinExistence type="evidence at protein level"/>
<name>ZN318_HUMAN</name>
<keyword id="KW-0010">Activator</keyword>
<keyword id="KW-0025">Alternative splicing</keyword>
<keyword id="KW-0175">Coiled coil</keyword>
<keyword id="KW-1017">Isopeptide bond</keyword>
<keyword id="KW-0469">Meiosis</keyword>
<keyword id="KW-0479">Metal-binding</keyword>
<keyword id="KW-0539">Nucleus</keyword>
<keyword id="KW-0597">Phosphoprotein</keyword>
<keyword id="KW-1267">Proteomics identification</keyword>
<keyword id="KW-1185">Reference proteome</keyword>
<keyword id="KW-0677">Repeat</keyword>
<keyword id="KW-0678">Repressor</keyword>
<keyword id="KW-0804">Transcription</keyword>
<keyword id="KW-0805">Transcription regulation</keyword>
<keyword id="KW-0832">Ubl conjugation</keyword>
<keyword id="KW-0862">Zinc</keyword>
<keyword id="KW-0863">Zinc-finger</keyword>